<name>RL23_ALBFT</name>
<dbReference type="EMBL" id="CP000267">
    <property type="protein sequence ID" value="ABD71493.1"/>
    <property type="molecule type" value="Genomic_DNA"/>
</dbReference>
<dbReference type="RefSeq" id="WP_011466056.1">
    <property type="nucleotide sequence ID" value="NC_007908.1"/>
</dbReference>
<dbReference type="SMR" id="Q21RW0"/>
<dbReference type="STRING" id="338969.Rfer_3793"/>
<dbReference type="KEGG" id="rfr:Rfer_3793"/>
<dbReference type="eggNOG" id="COG0089">
    <property type="taxonomic scope" value="Bacteria"/>
</dbReference>
<dbReference type="HOGENOM" id="CLU_037562_3_1_4"/>
<dbReference type="OrthoDB" id="9793353at2"/>
<dbReference type="Proteomes" id="UP000008332">
    <property type="component" value="Chromosome"/>
</dbReference>
<dbReference type="GO" id="GO:1990904">
    <property type="term" value="C:ribonucleoprotein complex"/>
    <property type="evidence" value="ECO:0007669"/>
    <property type="project" value="UniProtKB-KW"/>
</dbReference>
<dbReference type="GO" id="GO:0005840">
    <property type="term" value="C:ribosome"/>
    <property type="evidence" value="ECO:0007669"/>
    <property type="project" value="UniProtKB-KW"/>
</dbReference>
<dbReference type="GO" id="GO:0019843">
    <property type="term" value="F:rRNA binding"/>
    <property type="evidence" value="ECO:0007669"/>
    <property type="project" value="UniProtKB-UniRule"/>
</dbReference>
<dbReference type="GO" id="GO:0003735">
    <property type="term" value="F:structural constituent of ribosome"/>
    <property type="evidence" value="ECO:0007669"/>
    <property type="project" value="InterPro"/>
</dbReference>
<dbReference type="GO" id="GO:0006412">
    <property type="term" value="P:translation"/>
    <property type="evidence" value="ECO:0007669"/>
    <property type="project" value="UniProtKB-UniRule"/>
</dbReference>
<dbReference type="FunFam" id="3.30.70.330:FF:000001">
    <property type="entry name" value="50S ribosomal protein L23"/>
    <property type="match status" value="1"/>
</dbReference>
<dbReference type="Gene3D" id="3.30.70.330">
    <property type="match status" value="1"/>
</dbReference>
<dbReference type="HAMAP" id="MF_01369_B">
    <property type="entry name" value="Ribosomal_uL23_B"/>
    <property type="match status" value="1"/>
</dbReference>
<dbReference type="InterPro" id="IPR012677">
    <property type="entry name" value="Nucleotide-bd_a/b_plait_sf"/>
</dbReference>
<dbReference type="InterPro" id="IPR013025">
    <property type="entry name" value="Ribosomal_uL23-like"/>
</dbReference>
<dbReference type="InterPro" id="IPR012678">
    <property type="entry name" value="Ribosomal_uL23/eL15/eS24_sf"/>
</dbReference>
<dbReference type="NCBIfam" id="NF004359">
    <property type="entry name" value="PRK05738.1-3"/>
    <property type="match status" value="1"/>
</dbReference>
<dbReference type="NCBIfam" id="NF004363">
    <property type="entry name" value="PRK05738.2-4"/>
    <property type="match status" value="1"/>
</dbReference>
<dbReference type="PANTHER" id="PTHR11620">
    <property type="entry name" value="60S RIBOSOMAL PROTEIN L23A"/>
    <property type="match status" value="1"/>
</dbReference>
<dbReference type="Pfam" id="PF00276">
    <property type="entry name" value="Ribosomal_L23"/>
    <property type="match status" value="1"/>
</dbReference>
<dbReference type="SUPFAM" id="SSF54189">
    <property type="entry name" value="Ribosomal proteins S24e, L23 and L15e"/>
    <property type="match status" value="1"/>
</dbReference>
<evidence type="ECO:0000255" key="1">
    <source>
        <dbReference type="HAMAP-Rule" id="MF_01369"/>
    </source>
</evidence>
<evidence type="ECO:0000305" key="2"/>
<keyword id="KW-1185">Reference proteome</keyword>
<keyword id="KW-0687">Ribonucleoprotein</keyword>
<keyword id="KW-0689">Ribosomal protein</keyword>
<keyword id="KW-0694">RNA-binding</keyword>
<keyword id="KW-0699">rRNA-binding</keyword>
<reference key="1">
    <citation type="submission" date="2006-02" db="EMBL/GenBank/DDBJ databases">
        <title>Complete sequence of chromosome of Rhodoferax ferrireducens DSM 15236.</title>
        <authorList>
            <person name="Copeland A."/>
            <person name="Lucas S."/>
            <person name="Lapidus A."/>
            <person name="Barry K."/>
            <person name="Detter J.C."/>
            <person name="Glavina del Rio T."/>
            <person name="Hammon N."/>
            <person name="Israni S."/>
            <person name="Pitluck S."/>
            <person name="Brettin T."/>
            <person name="Bruce D."/>
            <person name="Han C."/>
            <person name="Tapia R."/>
            <person name="Gilna P."/>
            <person name="Kiss H."/>
            <person name="Schmutz J."/>
            <person name="Larimer F."/>
            <person name="Land M."/>
            <person name="Kyrpides N."/>
            <person name="Ivanova N."/>
            <person name="Richardson P."/>
        </authorList>
    </citation>
    <scope>NUCLEOTIDE SEQUENCE [LARGE SCALE GENOMIC DNA]</scope>
    <source>
        <strain>ATCC BAA-621 / DSM 15236 / T118</strain>
    </source>
</reference>
<comment type="function">
    <text evidence="1">One of the early assembly proteins it binds 23S rRNA. One of the proteins that surrounds the polypeptide exit tunnel on the outside of the ribosome. Forms the main docking site for trigger factor binding to the ribosome.</text>
</comment>
<comment type="subunit">
    <text evidence="1">Part of the 50S ribosomal subunit. Contacts protein L29, and trigger factor when it is bound to the ribosome.</text>
</comment>
<comment type="similarity">
    <text evidence="1">Belongs to the universal ribosomal protein uL23 family.</text>
</comment>
<accession>Q21RW0</accession>
<protein>
    <recommendedName>
        <fullName evidence="1">Large ribosomal subunit protein uL23</fullName>
    </recommendedName>
    <alternativeName>
        <fullName evidence="2">50S ribosomal protein L23</fullName>
    </alternativeName>
</protein>
<sequence>MSHGPNLTTFDEGRLMQVLVAPIVSEKATMIAEKSNAVTFKVLQDATKYEIKAAVQLMFKVEVKGVSVVNTKGKTKRFGKSVGRRDNIRKAYVTLKPGQELNLGGEAA</sequence>
<gene>
    <name evidence="1" type="primary">rplW</name>
    <name type="ordered locus">Rfer_3793</name>
</gene>
<organism>
    <name type="scientific">Albidiferax ferrireducens (strain ATCC BAA-621 / DSM 15236 / T118)</name>
    <name type="common">Rhodoferax ferrireducens</name>
    <dbReference type="NCBI Taxonomy" id="338969"/>
    <lineage>
        <taxon>Bacteria</taxon>
        <taxon>Pseudomonadati</taxon>
        <taxon>Pseudomonadota</taxon>
        <taxon>Betaproteobacteria</taxon>
        <taxon>Burkholderiales</taxon>
        <taxon>Comamonadaceae</taxon>
        <taxon>Rhodoferax</taxon>
    </lineage>
</organism>
<proteinExistence type="inferred from homology"/>
<feature type="chain" id="PRO_0000272822" description="Large ribosomal subunit protein uL23">
    <location>
        <begin position="1"/>
        <end position="108"/>
    </location>
</feature>